<evidence type="ECO:0000255" key="1">
    <source>
        <dbReference type="HAMAP-Rule" id="MF_00823"/>
    </source>
</evidence>
<evidence type="ECO:0000255" key="2">
    <source>
        <dbReference type="PROSITE-ProRule" id="PRU01137"/>
    </source>
</evidence>
<gene>
    <name evidence="1" type="primary">accA</name>
    <name type="ordered locus">SBO_0173</name>
</gene>
<protein>
    <recommendedName>
        <fullName evidence="1">Acetyl-coenzyme A carboxylase carboxyl transferase subunit alpha</fullName>
        <shortName evidence="1">ACCase subunit alpha</shortName>
        <shortName evidence="1">Acetyl-CoA carboxylase carboxyltransferase subunit alpha</shortName>
        <ecNumber evidence="1">2.1.3.15</ecNumber>
    </recommendedName>
</protein>
<name>ACCA_SHIBS</name>
<comment type="function">
    <text evidence="1">Component of the acetyl coenzyme A carboxylase (ACC) complex. First, biotin carboxylase catalyzes the carboxylation of biotin on its carrier protein (BCCP) and then the CO(2) group is transferred by the carboxyltransferase to acetyl-CoA to form malonyl-CoA.</text>
</comment>
<comment type="catalytic activity">
    <reaction evidence="1">
        <text>N(6)-carboxybiotinyl-L-lysyl-[protein] + acetyl-CoA = N(6)-biotinyl-L-lysyl-[protein] + malonyl-CoA</text>
        <dbReference type="Rhea" id="RHEA:54728"/>
        <dbReference type="Rhea" id="RHEA-COMP:10505"/>
        <dbReference type="Rhea" id="RHEA-COMP:10506"/>
        <dbReference type="ChEBI" id="CHEBI:57288"/>
        <dbReference type="ChEBI" id="CHEBI:57384"/>
        <dbReference type="ChEBI" id="CHEBI:83144"/>
        <dbReference type="ChEBI" id="CHEBI:83145"/>
        <dbReference type="EC" id="2.1.3.15"/>
    </reaction>
</comment>
<comment type="pathway">
    <text evidence="1">Lipid metabolism; malonyl-CoA biosynthesis; malonyl-CoA from acetyl-CoA: step 1/1.</text>
</comment>
<comment type="subunit">
    <text evidence="1">Acetyl-CoA carboxylase is a heterohexamer composed of biotin carboxyl carrier protein (AccB), biotin carboxylase (AccC) and two subunits each of ACCase subunit alpha (AccA) and ACCase subunit beta (AccD).</text>
</comment>
<comment type="subcellular location">
    <subcellularLocation>
        <location evidence="1">Cytoplasm</location>
    </subcellularLocation>
</comment>
<comment type="similarity">
    <text evidence="1">Belongs to the AccA family.</text>
</comment>
<sequence length="319" mass="35228">MSLNFLDFEQPIAELEAKIDSLTAVSRQDEKLDINIDEEVHRLREKSVELTRKIFADLGAWQIAQLARHPQRPYTLDYVRLAFDEFDELAGDRAYADDKAIVGGIARLDGRPVMIIGHQKGRETKEKIRRNFGMPAPEGYRKALRLMQMAERFKMPIITFIDTPGAYPGVGAEERGQSEAIARNLREMSRLGVPVVCTVIGEGGSGGALAIGVGDKVNMLQYSSYSVISPEGCASILWKSADKAPLAAEAMGIIAPRLKELKLIDSIIPEPLGGAHRNPEAMAASLKAQLLADLADLDVLSTEDLKNRRYQRLMSYGYA</sequence>
<dbReference type="EC" id="2.1.3.15" evidence="1"/>
<dbReference type="EMBL" id="CP000036">
    <property type="protein sequence ID" value="ABB64903.1"/>
    <property type="molecule type" value="Genomic_DNA"/>
</dbReference>
<dbReference type="RefSeq" id="WP_000055739.1">
    <property type="nucleotide sequence ID" value="NC_007613.1"/>
</dbReference>
<dbReference type="SMR" id="Q325V5"/>
<dbReference type="KEGG" id="sbo:SBO_0173"/>
<dbReference type="HOGENOM" id="CLU_015486_0_2_6"/>
<dbReference type="UniPathway" id="UPA00655">
    <property type="reaction ID" value="UER00711"/>
</dbReference>
<dbReference type="Proteomes" id="UP000007067">
    <property type="component" value="Chromosome"/>
</dbReference>
<dbReference type="GO" id="GO:0009317">
    <property type="term" value="C:acetyl-CoA carboxylase complex"/>
    <property type="evidence" value="ECO:0007669"/>
    <property type="project" value="InterPro"/>
</dbReference>
<dbReference type="GO" id="GO:0003989">
    <property type="term" value="F:acetyl-CoA carboxylase activity"/>
    <property type="evidence" value="ECO:0007669"/>
    <property type="project" value="InterPro"/>
</dbReference>
<dbReference type="GO" id="GO:0005524">
    <property type="term" value="F:ATP binding"/>
    <property type="evidence" value="ECO:0007669"/>
    <property type="project" value="UniProtKB-KW"/>
</dbReference>
<dbReference type="GO" id="GO:0016743">
    <property type="term" value="F:carboxyl- or carbamoyltransferase activity"/>
    <property type="evidence" value="ECO:0007669"/>
    <property type="project" value="UniProtKB-UniRule"/>
</dbReference>
<dbReference type="GO" id="GO:0006633">
    <property type="term" value="P:fatty acid biosynthetic process"/>
    <property type="evidence" value="ECO:0007669"/>
    <property type="project" value="UniProtKB-KW"/>
</dbReference>
<dbReference type="GO" id="GO:2001295">
    <property type="term" value="P:malonyl-CoA biosynthetic process"/>
    <property type="evidence" value="ECO:0007669"/>
    <property type="project" value="UniProtKB-UniRule"/>
</dbReference>
<dbReference type="FunFam" id="3.90.226.10:FF:000008">
    <property type="entry name" value="Acetyl-coenzyme A carboxylase carboxyl transferase subunit alpha"/>
    <property type="match status" value="1"/>
</dbReference>
<dbReference type="Gene3D" id="3.90.226.10">
    <property type="entry name" value="2-enoyl-CoA Hydratase, Chain A, domain 1"/>
    <property type="match status" value="1"/>
</dbReference>
<dbReference type="HAMAP" id="MF_00823">
    <property type="entry name" value="AcetylCoA_CT_alpha"/>
    <property type="match status" value="1"/>
</dbReference>
<dbReference type="InterPro" id="IPR001095">
    <property type="entry name" value="Acetyl_CoA_COase_a_su"/>
</dbReference>
<dbReference type="InterPro" id="IPR029045">
    <property type="entry name" value="ClpP/crotonase-like_dom_sf"/>
</dbReference>
<dbReference type="InterPro" id="IPR011763">
    <property type="entry name" value="COA_CT_C"/>
</dbReference>
<dbReference type="NCBIfam" id="TIGR00513">
    <property type="entry name" value="accA"/>
    <property type="match status" value="1"/>
</dbReference>
<dbReference type="NCBIfam" id="NF041504">
    <property type="entry name" value="AccA_sub"/>
    <property type="match status" value="1"/>
</dbReference>
<dbReference type="NCBIfam" id="NF004344">
    <property type="entry name" value="PRK05724.1"/>
    <property type="match status" value="1"/>
</dbReference>
<dbReference type="PANTHER" id="PTHR42853">
    <property type="entry name" value="ACETYL-COENZYME A CARBOXYLASE CARBOXYL TRANSFERASE SUBUNIT ALPHA"/>
    <property type="match status" value="1"/>
</dbReference>
<dbReference type="PANTHER" id="PTHR42853:SF3">
    <property type="entry name" value="ACETYL-COENZYME A CARBOXYLASE CARBOXYL TRANSFERASE SUBUNIT ALPHA, CHLOROPLASTIC"/>
    <property type="match status" value="1"/>
</dbReference>
<dbReference type="Pfam" id="PF03255">
    <property type="entry name" value="ACCA"/>
    <property type="match status" value="1"/>
</dbReference>
<dbReference type="PRINTS" id="PR01069">
    <property type="entry name" value="ACCCTRFRASEA"/>
</dbReference>
<dbReference type="SUPFAM" id="SSF52096">
    <property type="entry name" value="ClpP/crotonase"/>
    <property type="match status" value="1"/>
</dbReference>
<dbReference type="PROSITE" id="PS50989">
    <property type="entry name" value="COA_CT_CTER"/>
    <property type="match status" value="1"/>
</dbReference>
<proteinExistence type="inferred from homology"/>
<feature type="chain" id="PRO_0000223822" description="Acetyl-coenzyme A carboxylase carboxyl transferase subunit alpha">
    <location>
        <begin position="1"/>
        <end position="319"/>
    </location>
</feature>
<feature type="domain" description="CoA carboxyltransferase C-terminal" evidence="2">
    <location>
        <begin position="35"/>
        <end position="296"/>
    </location>
</feature>
<reference key="1">
    <citation type="journal article" date="2005" name="Nucleic Acids Res.">
        <title>Genome dynamics and diversity of Shigella species, the etiologic agents of bacillary dysentery.</title>
        <authorList>
            <person name="Yang F."/>
            <person name="Yang J."/>
            <person name="Zhang X."/>
            <person name="Chen L."/>
            <person name="Jiang Y."/>
            <person name="Yan Y."/>
            <person name="Tang X."/>
            <person name="Wang J."/>
            <person name="Xiong Z."/>
            <person name="Dong J."/>
            <person name="Xue Y."/>
            <person name="Zhu Y."/>
            <person name="Xu X."/>
            <person name="Sun L."/>
            <person name="Chen S."/>
            <person name="Nie H."/>
            <person name="Peng J."/>
            <person name="Xu J."/>
            <person name="Wang Y."/>
            <person name="Yuan Z."/>
            <person name="Wen Y."/>
            <person name="Yao Z."/>
            <person name="Shen Y."/>
            <person name="Qiang B."/>
            <person name="Hou Y."/>
            <person name="Yu J."/>
            <person name="Jin Q."/>
        </authorList>
    </citation>
    <scope>NUCLEOTIDE SEQUENCE [LARGE SCALE GENOMIC DNA]</scope>
    <source>
        <strain>Sb227</strain>
    </source>
</reference>
<organism>
    <name type="scientific">Shigella boydii serotype 4 (strain Sb227)</name>
    <dbReference type="NCBI Taxonomy" id="300268"/>
    <lineage>
        <taxon>Bacteria</taxon>
        <taxon>Pseudomonadati</taxon>
        <taxon>Pseudomonadota</taxon>
        <taxon>Gammaproteobacteria</taxon>
        <taxon>Enterobacterales</taxon>
        <taxon>Enterobacteriaceae</taxon>
        <taxon>Shigella</taxon>
    </lineage>
</organism>
<accession>Q325V5</accession>
<keyword id="KW-0067">ATP-binding</keyword>
<keyword id="KW-0963">Cytoplasm</keyword>
<keyword id="KW-0275">Fatty acid biosynthesis</keyword>
<keyword id="KW-0276">Fatty acid metabolism</keyword>
<keyword id="KW-0444">Lipid biosynthesis</keyword>
<keyword id="KW-0443">Lipid metabolism</keyword>
<keyword id="KW-0547">Nucleotide-binding</keyword>
<keyword id="KW-0808">Transferase</keyword>